<gene>
    <name type="ordered locus">lwe1581</name>
</gene>
<organism>
    <name type="scientific">Listeria welshimeri serovar 6b (strain ATCC 35897 / DSM 20650 / CCUG 15529 / CIP 8149 / NCTC 11857 / SLCC 5334 / V8)</name>
    <dbReference type="NCBI Taxonomy" id="386043"/>
    <lineage>
        <taxon>Bacteria</taxon>
        <taxon>Bacillati</taxon>
        <taxon>Bacillota</taxon>
        <taxon>Bacilli</taxon>
        <taxon>Bacillales</taxon>
        <taxon>Listeriaceae</taxon>
        <taxon>Listeria</taxon>
    </lineage>
</organism>
<evidence type="ECO:0000255" key="1">
    <source>
        <dbReference type="HAMAP-Rule" id="MF_01874"/>
    </source>
</evidence>
<proteinExistence type="inferred from homology"/>
<protein>
    <recommendedName>
        <fullName evidence="1">UPF0756 membrane protein lwe1581</fullName>
    </recommendedName>
</protein>
<reference key="1">
    <citation type="journal article" date="2006" name="J. Bacteriol.">
        <title>Whole-genome sequence of Listeria welshimeri reveals common steps in genome reduction with Listeria innocua as compared to Listeria monocytogenes.</title>
        <authorList>
            <person name="Hain T."/>
            <person name="Steinweg C."/>
            <person name="Kuenne C.T."/>
            <person name="Billion A."/>
            <person name="Ghai R."/>
            <person name="Chatterjee S.S."/>
            <person name="Domann E."/>
            <person name="Kaerst U."/>
            <person name="Goesmann A."/>
            <person name="Bekel T."/>
            <person name="Bartels D."/>
            <person name="Kaiser O."/>
            <person name="Meyer F."/>
            <person name="Puehler A."/>
            <person name="Weisshaar B."/>
            <person name="Wehland J."/>
            <person name="Liang C."/>
            <person name="Dandekar T."/>
            <person name="Lampidis R."/>
            <person name="Kreft J."/>
            <person name="Goebel W."/>
            <person name="Chakraborty T."/>
        </authorList>
    </citation>
    <scope>NUCLEOTIDE SEQUENCE [LARGE SCALE GENOMIC DNA]</scope>
    <source>
        <strain>ATCC 35897 / DSM 20650 / CCUG 15529 / CIP 8149 / NCTC 11857 / SLCC 5334 / V8</strain>
    </source>
</reference>
<keyword id="KW-1003">Cell membrane</keyword>
<keyword id="KW-0472">Membrane</keyword>
<keyword id="KW-0812">Transmembrane</keyword>
<keyword id="KW-1133">Transmembrane helix</keyword>
<comment type="subcellular location">
    <subcellularLocation>
        <location evidence="1">Cell membrane</location>
        <topology evidence="1">Multi-pass membrane protein</topology>
    </subcellularLocation>
</comment>
<comment type="similarity">
    <text evidence="1">Belongs to the UPF0756 family.</text>
</comment>
<feature type="chain" id="PRO_0000388905" description="UPF0756 membrane protein lwe1581">
    <location>
        <begin position="1"/>
        <end position="153"/>
    </location>
</feature>
<feature type="transmembrane region" description="Helical" evidence="1">
    <location>
        <begin position="6"/>
        <end position="26"/>
    </location>
</feature>
<feature type="transmembrane region" description="Helical" evidence="1">
    <location>
        <begin position="54"/>
        <end position="74"/>
    </location>
</feature>
<feature type="transmembrane region" description="Helical" evidence="1">
    <location>
        <begin position="80"/>
        <end position="100"/>
    </location>
</feature>
<feature type="transmembrane region" description="Helical" evidence="1">
    <location>
        <begin position="117"/>
        <end position="137"/>
    </location>
</feature>
<dbReference type="EMBL" id="AM263198">
    <property type="protein sequence ID" value="CAK20999.1"/>
    <property type="molecule type" value="Genomic_DNA"/>
</dbReference>
<dbReference type="RefSeq" id="WP_011702366.1">
    <property type="nucleotide sequence ID" value="NC_008555.1"/>
</dbReference>
<dbReference type="STRING" id="386043.lwe1581"/>
<dbReference type="GeneID" id="61189458"/>
<dbReference type="KEGG" id="lwe:lwe1581"/>
<dbReference type="eggNOG" id="COG2707">
    <property type="taxonomic scope" value="Bacteria"/>
</dbReference>
<dbReference type="HOGENOM" id="CLU_125889_1_0_9"/>
<dbReference type="OrthoDB" id="80306at2"/>
<dbReference type="Proteomes" id="UP000000779">
    <property type="component" value="Chromosome"/>
</dbReference>
<dbReference type="GO" id="GO:0005886">
    <property type="term" value="C:plasma membrane"/>
    <property type="evidence" value="ECO:0007669"/>
    <property type="project" value="UniProtKB-SubCell"/>
</dbReference>
<dbReference type="HAMAP" id="MF_01874">
    <property type="entry name" value="UPF0756"/>
    <property type="match status" value="1"/>
</dbReference>
<dbReference type="InterPro" id="IPR007382">
    <property type="entry name" value="UPF0756_TM"/>
</dbReference>
<dbReference type="PANTHER" id="PTHR38452">
    <property type="entry name" value="UPF0756 MEMBRANE PROTEIN YEAL"/>
    <property type="match status" value="1"/>
</dbReference>
<dbReference type="PANTHER" id="PTHR38452:SF1">
    <property type="entry name" value="UPF0756 MEMBRANE PROTEIN YEAL"/>
    <property type="match status" value="1"/>
</dbReference>
<dbReference type="Pfam" id="PF04284">
    <property type="entry name" value="DUF441"/>
    <property type="match status" value="1"/>
</dbReference>
<sequence length="153" mass="16076">MFTESMLFLLLFLLLGLIAKNNSLIIAVAVVILLKLFHVDGKVMEMVQAKGINWGVTIITVAILIPIATGQIGFKDLIDSFKSAAGWIGLGAGIAVSILAKKGVSYMAVDPQVTVSLVFGTILAVVLFRGIAAGPVIAAGIAYMAMQLVAFIK</sequence>
<name>Y1581_LISW6</name>
<accession>A0AJ17</accession>